<accession>A6KZN9</accession>
<comment type="function">
    <text evidence="1">Catalyzes a salvage reaction resulting in the formation of AMP, that is energically less costly than de novo synthesis.</text>
</comment>
<comment type="catalytic activity">
    <reaction evidence="1">
        <text>AMP + diphosphate = 5-phospho-alpha-D-ribose 1-diphosphate + adenine</text>
        <dbReference type="Rhea" id="RHEA:16609"/>
        <dbReference type="ChEBI" id="CHEBI:16708"/>
        <dbReference type="ChEBI" id="CHEBI:33019"/>
        <dbReference type="ChEBI" id="CHEBI:58017"/>
        <dbReference type="ChEBI" id="CHEBI:456215"/>
        <dbReference type="EC" id="2.4.2.7"/>
    </reaction>
</comment>
<comment type="pathway">
    <text evidence="1">Purine metabolism; AMP biosynthesis via salvage pathway; AMP from adenine: step 1/1.</text>
</comment>
<comment type="subunit">
    <text evidence="1">Homodimer.</text>
</comment>
<comment type="subcellular location">
    <subcellularLocation>
        <location evidence="1">Cytoplasm</location>
    </subcellularLocation>
</comment>
<comment type="similarity">
    <text evidence="1">Belongs to the purine/pyrimidine phosphoribosyltransferase family.</text>
</comment>
<evidence type="ECO:0000255" key="1">
    <source>
        <dbReference type="HAMAP-Rule" id="MF_00004"/>
    </source>
</evidence>
<protein>
    <recommendedName>
        <fullName evidence="1">Adenine phosphoribosyltransferase</fullName>
        <shortName evidence="1">APRT</shortName>
        <ecNumber evidence="1">2.4.2.7</ecNumber>
    </recommendedName>
</protein>
<organism>
    <name type="scientific">Phocaeicola vulgatus (strain ATCC 8482 / DSM 1447 / JCM 5826 / CCUG 4940 / NBRC 14291 / NCTC 11154)</name>
    <name type="common">Bacteroides vulgatus</name>
    <dbReference type="NCBI Taxonomy" id="435590"/>
    <lineage>
        <taxon>Bacteria</taxon>
        <taxon>Pseudomonadati</taxon>
        <taxon>Bacteroidota</taxon>
        <taxon>Bacteroidia</taxon>
        <taxon>Bacteroidales</taxon>
        <taxon>Bacteroidaceae</taxon>
        <taxon>Phocaeicola</taxon>
    </lineage>
</organism>
<reference key="1">
    <citation type="journal article" date="2007" name="PLoS Biol.">
        <title>Evolution of symbiotic bacteria in the distal human intestine.</title>
        <authorList>
            <person name="Xu J."/>
            <person name="Mahowald M.A."/>
            <person name="Ley R.E."/>
            <person name="Lozupone C.A."/>
            <person name="Hamady M."/>
            <person name="Martens E.C."/>
            <person name="Henrissat B."/>
            <person name="Coutinho P.M."/>
            <person name="Minx P."/>
            <person name="Latreille P."/>
            <person name="Cordum H."/>
            <person name="Van Brunt A."/>
            <person name="Kim K."/>
            <person name="Fulton R.S."/>
            <person name="Fulton L.A."/>
            <person name="Clifton S.W."/>
            <person name="Wilson R.K."/>
            <person name="Knight R.D."/>
            <person name="Gordon J.I."/>
        </authorList>
    </citation>
    <scope>NUCLEOTIDE SEQUENCE [LARGE SCALE GENOMIC DNA]</scope>
    <source>
        <strain>ATCC 8482 / DSM 1447 / JCM 5826 / CCUG 4940 / NBRC 14291 / NCTC 11154</strain>
    </source>
</reference>
<keyword id="KW-0963">Cytoplasm</keyword>
<keyword id="KW-0328">Glycosyltransferase</keyword>
<keyword id="KW-0660">Purine salvage</keyword>
<keyword id="KW-0808">Transferase</keyword>
<proteinExistence type="inferred from homology"/>
<dbReference type="EC" id="2.4.2.7" evidence="1"/>
<dbReference type="EMBL" id="CP000139">
    <property type="protein sequence ID" value="ABR38903.1"/>
    <property type="molecule type" value="Genomic_DNA"/>
</dbReference>
<dbReference type="RefSeq" id="WP_005843916.1">
    <property type="nucleotide sequence ID" value="NZ_JANSWM010000092.1"/>
</dbReference>
<dbReference type="SMR" id="A6KZN9"/>
<dbReference type="STRING" id="435590.BVU_1213"/>
<dbReference type="PaxDb" id="435590-BVU_1213"/>
<dbReference type="GeneID" id="5302179"/>
<dbReference type="KEGG" id="bvu:BVU_1213"/>
<dbReference type="eggNOG" id="COG0503">
    <property type="taxonomic scope" value="Bacteria"/>
</dbReference>
<dbReference type="HOGENOM" id="CLU_063339_3_0_10"/>
<dbReference type="BioCyc" id="BVUL435590:G1G59-1263-MONOMER"/>
<dbReference type="UniPathway" id="UPA00588">
    <property type="reaction ID" value="UER00646"/>
</dbReference>
<dbReference type="Proteomes" id="UP000002861">
    <property type="component" value="Chromosome"/>
</dbReference>
<dbReference type="GO" id="GO:0005737">
    <property type="term" value="C:cytoplasm"/>
    <property type="evidence" value="ECO:0007669"/>
    <property type="project" value="UniProtKB-SubCell"/>
</dbReference>
<dbReference type="GO" id="GO:0003999">
    <property type="term" value="F:adenine phosphoribosyltransferase activity"/>
    <property type="evidence" value="ECO:0007669"/>
    <property type="project" value="UniProtKB-UniRule"/>
</dbReference>
<dbReference type="GO" id="GO:0006168">
    <property type="term" value="P:adenine salvage"/>
    <property type="evidence" value="ECO:0007669"/>
    <property type="project" value="InterPro"/>
</dbReference>
<dbReference type="GO" id="GO:0044209">
    <property type="term" value="P:AMP salvage"/>
    <property type="evidence" value="ECO:0007669"/>
    <property type="project" value="UniProtKB-UniRule"/>
</dbReference>
<dbReference type="GO" id="GO:0006166">
    <property type="term" value="P:purine ribonucleoside salvage"/>
    <property type="evidence" value="ECO:0007669"/>
    <property type="project" value="UniProtKB-KW"/>
</dbReference>
<dbReference type="CDD" id="cd06223">
    <property type="entry name" value="PRTases_typeI"/>
    <property type="match status" value="1"/>
</dbReference>
<dbReference type="FunFam" id="3.40.50.2020:FF:000021">
    <property type="entry name" value="Adenine phosphoribosyltransferase"/>
    <property type="match status" value="1"/>
</dbReference>
<dbReference type="Gene3D" id="3.40.50.2020">
    <property type="match status" value="1"/>
</dbReference>
<dbReference type="HAMAP" id="MF_00004">
    <property type="entry name" value="Aden_phosphoribosyltr"/>
    <property type="match status" value="1"/>
</dbReference>
<dbReference type="InterPro" id="IPR005764">
    <property type="entry name" value="Ade_phspho_trans"/>
</dbReference>
<dbReference type="InterPro" id="IPR050120">
    <property type="entry name" value="Adenine_PRTase"/>
</dbReference>
<dbReference type="InterPro" id="IPR000836">
    <property type="entry name" value="PRibTrfase_dom"/>
</dbReference>
<dbReference type="InterPro" id="IPR029057">
    <property type="entry name" value="PRTase-like"/>
</dbReference>
<dbReference type="NCBIfam" id="TIGR01090">
    <property type="entry name" value="apt"/>
    <property type="match status" value="1"/>
</dbReference>
<dbReference type="NCBIfam" id="NF002634">
    <property type="entry name" value="PRK02304.1-3"/>
    <property type="match status" value="1"/>
</dbReference>
<dbReference type="NCBIfam" id="NF002636">
    <property type="entry name" value="PRK02304.1-5"/>
    <property type="match status" value="1"/>
</dbReference>
<dbReference type="PANTHER" id="PTHR11776">
    <property type="entry name" value="ADENINE PHOSPHORIBOSYLTRANSFERASE"/>
    <property type="match status" value="1"/>
</dbReference>
<dbReference type="PANTHER" id="PTHR11776:SF7">
    <property type="entry name" value="PHOSPHORIBOSYLTRANSFERASE DOMAIN-CONTAINING PROTEIN"/>
    <property type="match status" value="1"/>
</dbReference>
<dbReference type="Pfam" id="PF00156">
    <property type="entry name" value="Pribosyltran"/>
    <property type="match status" value="1"/>
</dbReference>
<dbReference type="SUPFAM" id="SSF53271">
    <property type="entry name" value="PRTase-like"/>
    <property type="match status" value="1"/>
</dbReference>
<feature type="chain" id="PRO_0000321339" description="Adenine phosphoribosyltransferase">
    <location>
        <begin position="1"/>
        <end position="174"/>
    </location>
</feature>
<name>APT_PHOV8</name>
<sequence length="174" mass="19188">MSKETLKANLREIPDFPIPGILFYDVTTLFKNPECLQEILDTLYEMYKDKGITKVVGIESRGFIMGGALAARLGAGFVMARKPGKLPAEVVEETYAKEYGTDTIQIHKDAIDENDVVLLHDDLLATGGTMAATHRLVQRCGAKKIFINFIIELGGLNGRKAFPEDITVDTLLTL</sequence>
<gene>
    <name evidence="1" type="primary">apt</name>
    <name type="ordered locus">BVU_1213</name>
</gene>